<accession>A0LL24</accession>
<dbReference type="EC" id="6.1.1.14" evidence="1"/>
<dbReference type="EMBL" id="CP000478">
    <property type="protein sequence ID" value="ABK18126.1"/>
    <property type="molecule type" value="Genomic_DNA"/>
</dbReference>
<dbReference type="RefSeq" id="WP_011699294.1">
    <property type="nucleotide sequence ID" value="NC_008554.1"/>
</dbReference>
<dbReference type="SMR" id="A0LL24"/>
<dbReference type="FunCoup" id="A0LL24">
    <property type="interactions" value="387"/>
</dbReference>
<dbReference type="STRING" id="335543.Sfum_2446"/>
<dbReference type="KEGG" id="sfu:Sfum_2446"/>
<dbReference type="eggNOG" id="COG0752">
    <property type="taxonomic scope" value="Bacteria"/>
</dbReference>
<dbReference type="HOGENOM" id="CLU_057066_1_0_7"/>
<dbReference type="InParanoid" id="A0LL24"/>
<dbReference type="OrthoDB" id="9802183at2"/>
<dbReference type="Proteomes" id="UP000001784">
    <property type="component" value="Chromosome"/>
</dbReference>
<dbReference type="GO" id="GO:0005829">
    <property type="term" value="C:cytosol"/>
    <property type="evidence" value="ECO:0007669"/>
    <property type="project" value="TreeGrafter"/>
</dbReference>
<dbReference type="GO" id="GO:0005524">
    <property type="term" value="F:ATP binding"/>
    <property type="evidence" value="ECO:0007669"/>
    <property type="project" value="UniProtKB-UniRule"/>
</dbReference>
<dbReference type="GO" id="GO:0004820">
    <property type="term" value="F:glycine-tRNA ligase activity"/>
    <property type="evidence" value="ECO:0007669"/>
    <property type="project" value="UniProtKB-UniRule"/>
</dbReference>
<dbReference type="GO" id="GO:0006426">
    <property type="term" value="P:glycyl-tRNA aminoacylation"/>
    <property type="evidence" value="ECO:0007669"/>
    <property type="project" value="UniProtKB-UniRule"/>
</dbReference>
<dbReference type="CDD" id="cd00733">
    <property type="entry name" value="GlyRS_alpha_core"/>
    <property type="match status" value="1"/>
</dbReference>
<dbReference type="FunFam" id="3.30.930.10:FF:000006">
    <property type="entry name" value="Glycine--tRNA ligase alpha subunit"/>
    <property type="match status" value="1"/>
</dbReference>
<dbReference type="Gene3D" id="3.30.930.10">
    <property type="entry name" value="Bira Bifunctional Protein, Domain 2"/>
    <property type="match status" value="1"/>
</dbReference>
<dbReference type="Gene3D" id="1.20.58.180">
    <property type="entry name" value="Class II aaRS and biotin synthetases, domain 2"/>
    <property type="match status" value="1"/>
</dbReference>
<dbReference type="HAMAP" id="MF_00254">
    <property type="entry name" value="Gly_tRNA_synth_alpha"/>
    <property type="match status" value="1"/>
</dbReference>
<dbReference type="InterPro" id="IPR045864">
    <property type="entry name" value="aa-tRNA-synth_II/BPL/LPL"/>
</dbReference>
<dbReference type="InterPro" id="IPR006194">
    <property type="entry name" value="Gly-tRNA-synth_heterodimer"/>
</dbReference>
<dbReference type="InterPro" id="IPR002310">
    <property type="entry name" value="Gly-tRNA_ligase_asu"/>
</dbReference>
<dbReference type="NCBIfam" id="TIGR00388">
    <property type="entry name" value="glyQ"/>
    <property type="match status" value="1"/>
</dbReference>
<dbReference type="NCBIfam" id="NF006827">
    <property type="entry name" value="PRK09348.1"/>
    <property type="match status" value="1"/>
</dbReference>
<dbReference type="PANTHER" id="PTHR30075:SF2">
    <property type="entry name" value="GLYCINE--TRNA LIGASE, CHLOROPLASTIC_MITOCHONDRIAL 2"/>
    <property type="match status" value="1"/>
</dbReference>
<dbReference type="PANTHER" id="PTHR30075">
    <property type="entry name" value="GLYCYL-TRNA SYNTHETASE"/>
    <property type="match status" value="1"/>
</dbReference>
<dbReference type="Pfam" id="PF02091">
    <property type="entry name" value="tRNA-synt_2e"/>
    <property type="match status" value="1"/>
</dbReference>
<dbReference type="PRINTS" id="PR01044">
    <property type="entry name" value="TRNASYNTHGA"/>
</dbReference>
<dbReference type="SUPFAM" id="SSF55681">
    <property type="entry name" value="Class II aaRS and biotin synthetases"/>
    <property type="match status" value="1"/>
</dbReference>
<dbReference type="PROSITE" id="PS50861">
    <property type="entry name" value="AA_TRNA_LIGASE_II_GLYAB"/>
    <property type="match status" value="1"/>
</dbReference>
<gene>
    <name evidence="1" type="primary">glyQ</name>
    <name type="ordered locus">Sfum_2446</name>
</gene>
<reference key="1">
    <citation type="submission" date="2006-10" db="EMBL/GenBank/DDBJ databases">
        <title>Complete sequence of Syntrophobacter fumaroxidans MPOB.</title>
        <authorList>
            <consortium name="US DOE Joint Genome Institute"/>
            <person name="Copeland A."/>
            <person name="Lucas S."/>
            <person name="Lapidus A."/>
            <person name="Barry K."/>
            <person name="Detter J.C."/>
            <person name="Glavina del Rio T."/>
            <person name="Hammon N."/>
            <person name="Israni S."/>
            <person name="Pitluck S."/>
            <person name="Goltsman E.G."/>
            <person name="Martinez M."/>
            <person name="Schmutz J."/>
            <person name="Larimer F."/>
            <person name="Land M."/>
            <person name="Hauser L."/>
            <person name="Kyrpides N."/>
            <person name="Kim E."/>
            <person name="Boone D.R."/>
            <person name="Brockman F."/>
            <person name="Culley D."/>
            <person name="Ferry J."/>
            <person name="Gunsalus R."/>
            <person name="McInerney M.J."/>
            <person name="Morrison M."/>
            <person name="Plugge C."/>
            <person name="Rohlin L."/>
            <person name="Scholten J."/>
            <person name="Sieber J."/>
            <person name="Stams A.J.M."/>
            <person name="Worm P."/>
            <person name="Henstra A.M."/>
            <person name="Richardson P."/>
        </authorList>
    </citation>
    <scope>NUCLEOTIDE SEQUENCE [LARGE SCALE GENOMIC DNA]</scope>
    <source>
        <strain>DSM 10017 / MPOB</strain>
    </source>
</reference>
<evidence type="ECO:0000255" key="1">
    <source>
        <dbReference type="HAMAP-Rule" id="MF_00254"/>
    </source>
</evidence>
<organism>
    <name type="scientific">Syntrophobacter fumaroxidans (strain DSM 10017 / MPOB)</name>
    <dbReference type="NCBI Taxonomy" id="335543"/>
    <lineage>
        <taxon>Bacteria</taxon>
        <taxon>Pseudomonadati</taxon>
        <taxon>Thermodesulfobacteriota</taxon>
        <taxon>Syntrophobacteria</taxon>
        <taxon>Syntrophobacterales</taxon>
        <taxon>Syntrophobacteraceae</taxon>
        <taxon>Syntrophobacter</taxon>
    </lineage>
</organism>
<name>SYGA_SYNFM</name>
<sequence>MTFQELILALDKFWSDRGCVIQQPYDLEVGAGTFNPATFLRVIGPEPYHVAYVEPSRRPTDGRYGENPNRLQHYYQYQVILKPSPPDSQGVYLESLRSFGIDPLEHDIRFVEDDWESPTLGASGLGWEVWLDGMEITQFTYFQQVGGIALSPVSLELTYGLERIAMYLQGVNSVYDLIWSGNVTYGDVHHRGEVEWSHYNFQQADVDMLLQLFNMYEAESHRMNEKGLVLPSYDYCLKCSHVFNLLDARGAISVTERTNYIARVRGMARQVAHAYAAQREAMGYPLLNKW</sequence>
<keyword id="KW-0030">Aminoacyl-tRNA synthetase</keyword>
<keyword id="KW-0067">ATP-binding</keyword>
<keyword id="KW-0963">Cytoplasm</keyword>
<keyword id="KW-0436">Ligase</keyword>
<keyword id="KW-0547">Nucleotide-binding</keyword>
<keyword id="KW-0648">Protein biosynthesis</keyword>
<keyword id="KW-1185">Reference proteome</keyword>
<proteinExistence type="inferred from homology"/>
<protein>
    <recommendedName>
        <fullName evidence="1">Glycine--tRNA ligase alpha subunit</fullName>
        <ecNumber evidence="1">6.1.1.14</ecNumber>
    </recommendedName>
    <alternativeName>
        <fullName evidence="1">Glycyl-tRNA synthetase alpha subunit</fullName>
        <shortName evidence="1">GlyRS</shortName>
    </alternativeName>
</protein>
<feature type="chain" id="PRO_1000047514" description="Glycine--tRNA ligase alpha subunit">
    <location>
        <begin position="1"/>
        <end position="290"/>
    </location>
</feature>
<comment type="catalytic activity">
    <reaction evidence="1">
        <text>tRNA(Gly) + glycine + ATP = glycyl-tRNA(Gly) + AMP + diphosphate</text>
        <dbReference type="Rhea" id="RHEA:16013"/>
        <dbReference type="Rhea" id="RHEA-COMP:9664"/>
        <dbReference type="Rhea" id="RHEA-COMP:9683"/>
        <dbReference type="ChEBI" id="CHEBI:30616"/>
        <dbReference type="ChEBI" id="CHEBI:33019"/>
        <dbReference type="ChEBI" id="CHEBI:57305"/>
        <dbReference type="ChEBI" id="CHEBI:78442"/>
        <dbReference type="ChEBI" id="CHEBI:78522"/>
        <dbReference type="ChEBI" id="CHEBI:456215"/>
        <dbReference type="EC" id="6.1.1.14"/>
    </reaction>
</comment>
<comment type="subunit">
    <text evidence="1">Tetramer of two alpha and two beta subunits.</text>
</comment>
<comment type="subcellular location">
    <subcellularLocation>
        <location evidence="1">Cytoplasm</location>
    </subcellularLocation>
</comment>
<comment type="similarity">
    <text evidence="1">Belongs to the class-II aminoacyl-tRNA synthetase family.</text>
</comment>